<evidence type="ECO:0000305" key="1"/>
<organismHost>
    <name type="scientific">Bos taurus</name>
    <name type="common">Bovine</name>
    <dbReference type="NCBI Taxonomy" id="9913"/>
</organismHost>
<accession>P0C2R1</accession>
<accession>Q9QAR3</accession>
<organism>
    <name type="scientific">Bovine coronavirus (strain LSU-94LSS-051)</name>
    <name type="common">BCoV-LSU</name>
    <name type="synonym">BCV</name>
    <dbReference type="NCBI Taxonomy" id="233261"/>
    <lineage>
        <taxon>Viruses</taxon>
        <taxon>Riboviria</taxon>
        <taxon>Orthornavirae</taxon>
        <taxon>Pisuviricota</taxon>
        <taxon>Pisoniviricetes</taxon>
        <taxon>Nidovirales</taxon>
        <taxon>Cornidovirineae</taxon>
        <taxon>Coronaviridae</taxon>
        <taxon>Orthocoronavirinae</taxon>
        <taxon>Betacoronavirus</taxon>
        <taxon>Embecovirus</taxon>
        <taxon>Betacoronavirus 1</taxon>
    </lineage>
</organism>
<proteinExistence type="inferred from homology"/>
<reference key="1">
    <citation type="journal article" date="1998" name="Virus Genes">
        <title>Nucleotide and predicted amino acid sequences of all genes encoded by the 3' genomic portion (9.5 kb) of respiratory bovine coronaviruses and comparisons among respiratory and enteric coronaviruses.</title>
        <authorList>
            <person name="Chouljenko V.N."/>
            <person name="Kousoulas K.G."/>
            <person name="Lin X.Q."/>
            <person name="Storz J."/>
        </authorList>
    </citation>
    <scope>NUCLEOTIDE SEQUENCE [GENOMIC RNA]</scope>
    <source>
        <strain>Isolate LSU-94LSS-051-2</strain>
    </source>
</reference>
<dbReference type="EMBL" id="AF058943">
    <property type="protein sequence ID" value="AAF25511.1"/>
    <property type="molecule type" value="Genomic_RNA"/>
</dbReference>
<dbReference type="InterPro" id="IPR005603">
    <property type="entry name" value="Corona_NS4"/>
</dbReference>
<dbReference type="Pfam" id="PF03905">
    <property type="entry name" value="Corona_NS4"/>
    <property type="match status" value="1"/>
</dbReference>
<protein>
    <recommendedName>
        <fullName>Non-structural protein of 4.8 kDa</fullName>
        <shortName>ns4.8</shortName>
    </recommendedName>
    <alternativeName>
        <fullName>4.8 kDa accessory protein</fullName>
    </alternativeName>
</protein>
<gene>
    <name type="ORF">4b</name>
</gene>
<comment type="similarity">
    <text evidence="1">Belongs to the coronaviruses ns4/ns4.8 protein family.</text>
</comment>
<feature type="chain" id="PRO_0000283959" description="Non-structural protein of 4.8 kDa">
    <location>
        <begin position="1"/>
        <end position="45"/>
    </location>
</feature>
<name>NS48_CVBLS</name>
<sequence>MPMATTIEGADYTNIMPITVLTTVYLGVSIGIDTSTTGFTCFSRY</sequence>